<organism>
    <name type="scientific">Alteromonas mediterranea (strain DSM 17117 / CIP 110805 / LMG 28347 / Deep ecotype)</name>
    <dbReference type="NCBI Taxonomy" id="1774373"/>
    <lineage>
        <taxon>Bacteria</taxon>
        <taxon>Pseudomonadati</taxon>
        <taxon>Pseudomonadota</taxon>
        <taxon>Gammaproteobacteria</taxon>
        <taxon>Alteromonadales</taxon>
        <taxon>Alteromonadaceae</taxon>
        <taxon>Alteromonas/Salinimonas group</taxon>
        <taxon>Alteromonas</taxon>
    </lineage>
</organism>
<proteinExistence type="inferred from homology"/>
<evidence type="ECO:0000255" key="1">
    <source>
        <dbReference type="HAMAP-Rule" id="MF_01862"/>
    </source>
</evidence>
<accession>B4S2L3</accession>
<accession>F2G3U4</accession>
<feature type="chain" id="PRO_0000369689" description="Ribosomal RNA small subunit methyltransferase C">
    <location>
        <begin position="1"/>
        <end position="360"/>
    </location>
</feature>
<name>RSMC_ALTMD</name>
<gene>
    <name evidence="1" type="primary">rsmC</name>
    <name type="ordered locus">MADE_1001370</name>
</gene>
<comment type="function">
    <text evidence="1">Specifically methylates the guanine in position 1207 of 16S rRNA in the 30S particle.</text>
</comment>
<comment type="catalytic activity">
    <reaction evidence="1">
        <text>guanosine(1207) in 16S rRNA + S-adenosyl-L-methionine = N(2)-methylguanosine(1207) in 16S rRNA + S-adenosyl-L-homocysteine + H(+)</text>
        <dbReference type="Rhea" id="RHEA:42736"/>
        <dbReference type="Rhea" id="RHEA-COMP:10213"/>
        <dbReference type="Rhea" id="RHEA-COMP:10214"/>
        <dbReference type="ChEBI" id="CHEBI:15378"/>
        <dbReference type="ChEBI" id="CHEBI:57856"/>
        <dbReference type="ChEBI" id="CHEBI:59789"/>
        <dbReference type="ChEBI" id="CHEBI:74269"/>
        <dbReference type="ChEBI" id="CHEBI:74481"/>
        <dbReference type="EC" id="2.1.1.172"/>
    </reaction>
</comment>
<comment type="subunit">
    <text evidence="1">Monomer.</text>
</comment>
<comment type="subcellular location">
    <subcellularLocation>
        <location evidence="1">Cytoplasm</location>
    </subcellularLocation>
</comment>
<comment type="similarity">
    <text evidence="1">Belongs to the methyltransferase superfamily. RsmC family.</text>
</comment>
<protein>
    <recommendedName>
        <fullName evidence="1">Ribosomal RNA small subunit methyltransferase C</fullName>
        <ecNumber evidence="1">2.1.1.172</ecNumber>
    </recommendedName>
    <alternativeName>
        <fullName evidence="1">16S rRNA m2G1207 methyltransferase</fullName>
    </alternativeName>
    <alternativeName>
        <fullName evidence="1">rRNA (guanine-N(2)-)-methyltransferase RsmC</fullName>
    </alternativeName>
</protein>
<sequence>MILSPQSQLLERNIALFDEGQWAFINPSDAYFLDGLKSQEVTVIHQYFDIFAECVRVIPSASFDSRDITSKGFEVSQKVGNHTHIFTPFVALEKSHTDVMISLPKAKTHFQMLLRMAASMVGQNGRIHVVGENKGGIKSAAKLMQQYGATQKVDSARHCSLITVIVEAPHLAFEAEAWIDTNTYAVEGTSWKVASMPGVFSYKELDAGTELLLEKLSTSLSGDVLDFACGAGVIASYIMLKYPHLKLHLTDVSALAIYCSALTLAENQLAATLYAADGLHGMTNKVQHIVTNPPFHTGIKTDYTVTKRFISDAKARLTRGGTMQMVANRFLPYPGLLSEHFQTVYTTAQTSQFSVYQATL</sequence>
<dbReference type="EC" id="2.1.1.172" evidence="1"/>
<dbReference type="EMBL" id="CP001103">
    <property type="protein sequence ID" value="AEA96423.1"/>
    <property type="molecule type" value="Genomic_DNA"/>
</dbReference>
<dbReference type="RefSeq" id="WP_012516797.1">
    <property type="nucleotide sequence ID" value="NC_011138.3"/>
</dbReference>
<dbReference type="SMR" id="B4S2L3"/>
<dbReference type="KEGG" id="amc:MADE_1001370"/>
<dbReference type="PATRIC" id="fig|314275.5.peg.282"/>
<dbReference type="HOGENOM" id="CLU_049581_0_0_6"/>
<dbReference type="Proteomes" id="UP000001870">
    <property type="component" value="Chromosome"/>
</dbReference>
<dbReference type="GO" id="GO:0005737">
    <property type="term" value="C:cytoplasm"/>
    <property type="evidence" value="ECO:0007669"/>
    <property type="project" value="UniProtKB-SubCell"/>
</dbReference>
<dbReference type="GO" id="GO:0052914">
    <property type="term" value="F:16S rRNA (guanine(1207)-N(2))-methyltransferase activity"/>
    <property type="evidence" value="ECO:0007669"/>
    <property type="project" value="UniProtKB-EC"/>
</dbReference>
<dbReference type="GO" id="GO:0003676">
    <property type="term" value="F:nucleic acid binding"/>
    <property type="evidence" value="ECO:0007669"/>
    <property type="project" value="InterPro"/>
</dbReference>
<dbReference type="Gene3D" id="3.40.50.150">
    <property type="entry name" value="Vaccinia Virus protein VP39"/>
    <property type="match status" value="2"/>
</dbReference>
<dbReference type="HAMAP" id="MF_01862">
    <property type="entry name" value="16SrRNA_methyltr_C"/>
    <property type="match status" value="1"/>
</dbReference>
<dbReference type="InterPro" id="IPR002052">
    <property type="entry name" value="DNA_methylase_N6_adenine_CS"/>
</dbReference>
<dbReference type="InterPro" id="IPR013675">
    <property type="entry name" value="Mtase_sm_N"/>
</dbReference>
<dbReference type="InterPro" id="IPR023543">
    <property type="entry name" value="rRNA_ssu_MeTfrase_C"/>
</dbReference>
<dbReference type="InterPro" id="IPR046977">
    <property type="entry name" value="RsmC/RlmG"/>
</dbReference>
<dbReference type="InterPro" id="IPR029063">
    <property type="entry name" value="SAM-dependent_MTases_sf"/>
</dbReference>
<dbReference type="InterPro" id="IPR007848">
    <property type="entry name" value="Small_mtfrase_dom"/>
</dbReference>
<dbReference type="PANTHER" id="PTHR47816">
    <property type="entry name" value="RIBOSOMAL RNA SMALL SUBUNIT METHYLTRANSFERASE C"/>
    <property type="match status" value="1"/>
</dbReference>
<dbReference type="PANTHER" id="PTHR47816:SF4">
    <property type="entry name" value="RIBOSOMAL RNA SMALL SUBUNIT METHYLTRANSFERASE C"/>
    <property type="match status" value="1"/>
</dbReference>
<dbReference type="Pfam" id="PF05175">
    <property type="entry name" value="MTS"/>
    <property type="match status" value="1"/>
</dbReference>
<dbReference type="Pfam" id="PF08468">
    <property type="entry name" value="MTS_N"/>
    <property type="match status" value="1"/>
</dbReference>
<dbReference type="SUPFAM" id="SSF53335">
    <property type="entry name" value="S-adenosyl-L-methionine-dependent methyltransferases"/>
    <property type="match status" value="1"/>
</dbReference>
<reference key="1">
    <citation type="journal article" date="2008" name="ISME J.">
        <title>Comparative genomics of two ecotypes of the marine planktonic copiotroph Alteromonas macleodii suggests alternative lifestyles associated with different kinds of particulate organic matter.</title>
        <authorList>
            <person name="Ivars-Martinez E."/>
            <person name="Martin-Cuadrado A.-B."/>
            <person name="D'Auria G."/>
            <person name="Mira A."/>
            <person name="Ferriera S."/>
            <person name="Johnson J."/>
            <person name="Friedman R."/>
            <person name="Rodriguez-Valera F."/>
        </authorList>
    </citation>
    <scope>NUCLEOTIDE SEQUENCE [LARGE SCALE GENOMIC DNA]</scope>
    <source>
        <strain>DSM 17117 / CIP 110805 / LMG 28347 / Deep ecotype</strain>
    </source>
</reference>
<keyword id="KW-0963">Cytoplasm</keyword>
<keyword id="KW-0489">Methyltransferase</keyword>
<keyword id="KW-0698">rRNA processing</keyword>
<keyword id="KW-0949">S-adenosyl-L-methionine</keyword>
<keyword id="KW-0808">Transferase</keyword>